<proteinExistence type="inferred from homology"/>
<comment type="function">
    <text evidence="1">Participates actively in the response to hyperosmotic and heat shock by preventing the aggregation of stress-denatured proteins, in association with DnaK and GrpE. It is the nucleotide exchange factor for DnaK and may function as a thermosensor. Unfolded proteins bind initially to DnaJ; upon interaction with the DnaJ-bound protein, DnaK hydrolyzes its bound ATP, resulting in the formation of a stable complex. GrpE releases ADP from DnaK; ATP binding to DnaK triggers the release of the substrate protein, thus completing the reaction cycle. Several rounds of ATP-dependent interactions between DnaJ, DnaK and GrpE are required for fully efficient folding.</text>
</comment>
<comment type="subunit">
    <text evidence="1">Homodimer.</text>
</comment>
<comment type="subcellular location">
    <subcellularLocation>
        <location evidence="1">Cytoplasm</location>
    </subcellularLocation>
</comment>
<comment type="similarity">
    <text evidence="1">Belongs to the GrpE family.</text>
</comment>
<reference key="1">
    <citation type="journal article" date="2009" name="J. Bacteriol.">
        <title>Genome sequence of the probiotic bacterium Bifidobacterium animalis subsp. lactis AD011.</title>
        <authorList>
            <person name="Kim J.F."/>
            <person name="Jeong H."/>
            <person name="Yu D.S."/>
            <person name="Choi S.-H."/>
            <person name="Hur C.-G."/>
            <person name="Park M.-S."/>
            <person name="Yoon S.H."/>
            <person name="Kim D.-W."/>
            <person name="Ji G.E."/>
            <person name="Park H.-S."/>
            <person name="Oh T.K."/>
        </authorList>
    </citation>
    <scope>NUCLEOTIDE SEQUENCE [LARGE SCALE GENOMIC DNA]</scope>
    <source>
        <strain>AD011</strain>
    </source>
</reference>
<dbReference type="EMBL" id="CP001213">
    <property type="protein sequence ID" value="ACL29190.1"/>
    <property type="molecule type" value="Genomic_DNA"/>
</dbReference>
<dbReference type="RefSeq" id="WP_004219270.1">
    <property type="nucleotide sequence ID" value="NC_011835.1"/>
</dbReference>
<dbReference type="SMR" id="B8DT61"/>
<dbReference type="STRING" id="442563.BLA_0898"/>
<dbReference type="GeneID" id="29695915"/>
<dbReference type="KEGG" id="bla:BLA_0898"/>
<dbReference type="HOGENOM" id="CLU_057217_4_0_11"/>
<dbReference type="Proteomes" id="UP000002456">
    <property type="component" value="Chromosome"/>
</dbReference>
<dbReference type="GO" id="GO:0005737">
    <property type="term" value="C:cytoplasm"/>
    <property type="evidence" value="ECO:0007669"/>
    <property type="project" value="UniProtKB-SubCell"/>
</dbReference>
<dbReference type="GO" id="GO:0000774">
    <property type="term" value="F:adenyl-nucleotide exchange factor activity"/>
    <property type="evidence" value="ECO:0007669"/>
    <property type="project" value="InterPro"/>
</dbReference>
<dbReference type="GO" id="GO:0042803">
    <property type="term" value="F:protein homodimerization activity"/>
    <property type="evidence" value="ECO:0007669"/>
    <property type="project" value="InterPro"/>
</dbReference>
<dbReference type="GO" id="GO:0051087">
    <property type="term" value="F:protein-folding chaperone binding"/>
    <property type="evidence" value="ECO:0007669"/>
    <property type="project" value="InterPro"/>
</dbReference>
<dbReference type="GO" id="GO:0051082">
    <property type="term" value="F:unfolded protein binding"/>
    <property type="evidence" value="ECO:0007669"/>
    <property type="project" value="TreeGrafter"/>
</dbReference>
<dbReference type="GO" id="GO:0006457">
    <property type="term" value="P:protein folding"/>
    <property type="evidence" value="ECO:0007669"/>
    <property type="project" value="InterPro"/>
</dbReference>
<dbReference type="CDD" id="cd00446">
    <property type="entry name" value="GrpE"/>
    <property type="match status" value="1"/>
</dbReference>
<dbReference type="Gene3D" id="3.90.20.20">
    <property type="match status" value="1"/>
</dbReference>
<dbReference type="Gene3D" id="2.30.22.10">
    <property type="entry name" value="Head domain of nucleotide exchange factor GrpE"/>
    <property type="match status" value="1"/>
</dbReference>
<dbReference type="HAMAP" id="MF_01151">
    <property type="entry name" value="GrpE"/>
    <property type="match status" value="1"/>
</dbReference>
<dbReference type="InterPro" id="IPR000740">
    <property type="entry name" value="GrpE"/>
</dbReference>
<dbReference type="InterPro" id="IPR013805">
    <property type="entry name" value="GrpE_coiled_coil"/>
</dbReference>
<dbReference type="InterPro" id="IPR009012">
    <property type="entry name" value="GrpE_head"/>
</dbReference>
<dbReference type="NCBIfam" id="NF010754">
    <property type="entry name" value="PRK14157.1"/>
    <property type="match status" value="1"/>
</dbReference>
<dbReference type="PANTHER" id="PTHR21237">
    <property type="entry name" value="GRPE PROTEIN"/>
    <property type="match status" value="1"/>
</dbReference>
<dbReference type="PANTHER" id="PTHR21237:SF23">
    <property type="entry name" value="GRPE PROTEIN HOMOLOG, MITOCHONDRIAL"/>
    <property type="match status" value="1"/>
</dbReference>
<dbReference type="Pfam" id="PF01025">
    <property type="entry name" value="GrpE"/>
    <property type="match status" value="1"/>
</dbReference>
<dbReference type="PRINTS" id="PR00773">
    <property type="entry name" value="GRPEPROTEIN"/>
</dbReference>
<dbReference type="SUPFAM" id="SSF58014">
    <property type="entry name" value="Coiled-coil domain of nucleotide exchange factor GrpE"/>
    <property type="match status" value="1"/>
</dbReference>
<dbReference type="SUPFAM" id="SSF51064">
    <property type="entry name" value="Head domain of nucleotide exchange factor GrpE"/>
    <property type="match status" value="1"/>
</dbReference>
<dbReference type="PROSITE" id="PS01071">
    <property type="entry name" value="GRPE"/>
    <property type="match status" value="1"/>
</dbReference>
<evidence type="ECO:0000255" key="1">
    <source>
        <dbReference type="HAMAP-Rule" id="MF_01151"/>
    </source>
</evidence>
<evidence type="ECO:0000256" key="2">
    <source>
        <dbReference type="SAM" id="MobiDB-lite"/>
    </source>
</evidence>
<name>GRPE_BIFA0</name>
<gene>
    <name evidence="1" type="primary">grpE</name>
    <name type="ordered locus">BLA_0898</name>
</gene>
<accession>B8DT61</accession>
<feature type="chain" id="PRO_1000164179" description="Protein GrpE">
    <location>
        <begin position="1"/>
        <end position="229"/>
    </location>
</feature>
<feature type="region of interest" description="Disordered" evidence="2">
    <location>
        <begin position="1"/>
        <end position="89"/>
    </location>
</feature>
<feature type="compositionally biased region" description="Low complexity" evidence="2">
    <location>
        <begin position="24"/>
        <end position="36"/>
    </location>
</feature>
<feature type="compositionally biased region" description="Basic and acidic residues" evidence="2">
    <location>
        <begin position="39"/>
        <end position="50"/>
    </location>
</feature>
<feature type="compositionally biased region" description="Low complexity" evidence="2">
    <location>
        <begin position="65"/>
        <end position="84"/>
    </location>
</feature>
<organism>
    <name type="scientific">Bifidobacterium animalis subsp. lactis (strain AD011)</name>
    <dbReference type="NCBI Taxonomy" id="442563"/>
    <lineage>
        <taxon>Bacteria</taxon>
        <taxon>Bacillati</taxon>
        <taxon>Actinomycetota</taxon>
        <taxon>Actinomycetes</taxon>
        <taxon>Bifidobacteriales</taxon>
        <taxon>Bifidobacteriaceae</taxon>
        <taxon>Bifidobacterium</taxon>
    </lineage>
</organism>
<sequence length="229" mass="24732">MSDFNKDDYLNDLPDADELANGQASPDADGADAPSDTGEQLKDDMLKDAAAEQSAGEQASEESAKAAAEATADAASDGDAEGSSLTPLGQAKKEAAEYLEALQRERAEFINYRNRTKKDMDRARQQGIIDVLTAMLPGLDDIDRIREHGEMDDSFKAVAAKIDKTFEKFGVEKFGLKGEDFDPTKHEAILHKPDPEASKATVDTVVEAGYRIGDRVIRAARVVVASPQN</sequence>
<protein>
    <recommendedName>
        <fullName evidence="1">Protein GrpE</fullName>
    </recommendedName>
    <alternativeName>
        <fullName evidence="1">HSP-70 cofactor</fullName>
    </alternativeName>
</protein>
<keyword id="KW-0143">Chaperone</keyword>
<keyword id="KW-0963">Cytoplasm</keyword>
<keyword id="KW-1185">Reference proteome</keyword>
<keyword id="KW-0346">Stress response</keyword>